<name>ADDB_CLOTE</name>
<proteinExistence type="inferred from homology"/>
<gene>
    <name evidence="1" type="primary">addB</name>
    <name type="ordered locus">CTC_00686</name>
</gene>
<organism>
    <name type="scientific">Clostridium tetani (strain Massachusetts / E88)</name>
    <dbReference type="NCBI Taxonomy" id="212717"/>
    <lineage>
        <taxon>Bacteria</taxon>
        <taxon>Bacillati</taxon>
        <taxon>Bacillota</taxon>
        <taxon>Clostridia</taxon>
        <taxon>Eubacteriales</taxon>
        <taxon>Clostridiaceae</taxon>
        <taxon>Clostridium</taxon>
    </lineage>
</organism>
<accession>Q897P5</accession>
<evidence type="ECO:0000255" key="1">
    <source>
        <dbReference type="HAMAP-Rule" id="MF_01452"/>
    </source>
</evidence>
<evidence type="ECO:0000305" key="2"/>
<dbReference type="EC" id="3.1.-.-" evidence="1"/>
<dbReference type="EMBL" id="AE015927">
    <property type="protein sequence ID" value="AAO35291.1"/>
    <property type="status" value="ALT_INIT"/>
    <property type="molecule type" value="Genomic_DNA"/>
</dbReference>
<dbReference type="RefSeq" id="WP_035124448.1">
    <property type="nucleotide sequence ID" value="NC_004557.1"/>
</dbReference>
<dbReference type="SMR" id="Q897P5"/>
<dbReference type="STRING" id="212717.CTC_00686"/>
<dbReference type="GeneID" id="24252813"/>
<dbReference type="KEGG" id="ctc:CTC_00686"/>
<dbReference type="HOGENOM" id="CLU_007838_0_0_9"/>
<dbReference type="OrthoDB" id="9758506at2"/>
<dbReference type="Proteomes" id="UP000001412">
    <property type="component" value="Chromosome"/>
</dbReference>
<dbReference type="GO" id="GO:0051539">
    <property type="term" value="F:4 iron, 4 sulfur cluster binding"/>
    <property type="evidence" value="ECO:0007669"/>
    <property type="project" value="UniProtKB-KW"/>
</dbReference>
<dbReference type="GO" id="GO:0008409">
    <property type="term" value="F:5'-3' exonuclease activity"/>
    <property type="evidence" value="ECO:0007669"/>
    <property type="project" value="UniProtKB-UniRule"/>
</dbReference>
<dbReference type="GO" id="GO:0005524">
    <property type="term" value="F:ATP binding"/>
    <property type="evidence" value="ECO:0007669"/>
    <property type="project" value="UniProtKB-UniRule"/>
</dbReference>
<dbReference type="GO" id="GO:0003690">
    <property type="term" value="F:double-stranded DNA binding"/>
    <property type="evidence" value="ECO:0007669"/>
    <property type="project" value="UniProtKB-UniRule"/>
</dbReference>
<dbReference type="GO" id="GO:0004386">
    <property type="term" value="F:helicase activity"/>
    <property type="evidence" value="ECO:0007669"/>
    <property type="project" value="UniProtKB-KW"/>
</dbReference>
<dbReference type="GO" id="GO:0046872">
    <property type="term" value="F:metal ion binding"/>
    <property type="evidence" value="ECO:0007669"/>
    <property type="project" value="UniProtKB-KW"/>
</dbReference>
<dbReference type="GO" id="GO:0000724">
    <property type="term" value="P:double-strand break repair via homologous recombination"/>
    <property type="evidence" value="ECO:0007669"/>
    <property type="project" value="UniProtKB-UniRule"/>
</dbReference>
<dbReference type="Gene3D" id="3.90.320.10">
    <property type="match status" value="1"/>
</dbReference>
<dbReference type="Gene3D" id="6.10.140.1030">
    <property type="match status" value="1"/>
</dbReference>
<dbReference type="Gene3D" id="3.40.50.300">
    <property type="entry name" value="P-loop containing nucleotide triphosphate hydrolases"/>
    <property type="match status" value="3"/>
</dbReference>
<dbReference type="HAMAP" id="MF_01452">
    <property type="entry name" value="AddB_type1"/>
    <property type="match status" value="1"/>
</dbReference>
<dbReference type="InterPro" id="IPR049035">
    <property type="entry name" value="ADDB_N"/>
</dbReference>
<dbReference type="InterPro" id="IPR014140">
    <property type="entry name" value="DNA_helicase_suAddB"/>
</dbReference>
<dbReference type="InterPro" id="IPR014017">
    <property type="entry name" value="DNA_helicase_UvrD-like_C"/>
</dbReference>
<dbReference type="InterPro" id="IPR027417">
    <property type="entry name" value="P-loop_NTPase"/>
</dbReference>
<dbReference type="InterPro" id="IPR011604">
    <property type="entry name" value="PDDEXK-like_dom_sf"/>
</dbReference>
<dbReference type="InterPro" id="IPR038726">
    <property type="entry name" value="PDDEXK_AddAB-type"/>
</dbReference>
<dbReference type="InterPro" id="IPR011335">
    <property type="entry name" value="Restrct_endonuc-II-like"/>
</dbReference>
<dbReference type="NCBIfam" id="TIGR02773">
    <property type="entry name" value="addB_Gpos"/>
    <property type="match status" value="1"/>
</dbReference>
<dbReference type="PANTHER" id="PTHR30591">
    <property type="entry name" value="RECBCD ENZYME SUBUNIT RECC"/>
    <property type="match status" value="1"/>
</dbReference>
<dbReference type="PANTHER" id="PTHR30591:SF1">
    <property type="entry name" value="RECBCD ENZYME SUBUNIT RECC"/>
    <property type="match status" value="1"/>
</dbReference>
<dbReference type="Pfam" id="PF21445">
    <property type="entry name" value="ADDB_N"/>
    <property type="match status" value="1"/>
</dbReference>
<dbReference type="Pfam" id="PF12705">
    <property type="entry name" value="PDDEXK_1"/>
    <property type="match status" value="1"/>
</dbReference>
<dbReference type="Pfam" id="PF13361">
    <property type="entry name" value="UvrD_C"/>
    <property type="match status" value="1"/>
</dbReference>
<dbReference type="SUPFAM" id="SSF52540">
    <property type="entry name" value="P-loop containing nucleoside triphosphate hydrolases"/>
    <property type="match status" value="1"/>
</dbReference>
<dbReference type="SUPFAM" id="SSF52980">
    <property type="entry name" value="Restriction endonuclease-like"/>
    <property type="match status" value="1"/>
</dbReference>
<keyword id="KW-0004">4Fe-4S</keyword>
<keyword id="KW-0067">ATP-binding</keyword>
<keyword id="KW-0227">DNA damage</keyword>
<keyword id="KW-0234">DNA repair</keyword>
<keyword id="KW-0238">DNA-binding</keyword>
<keyword id="KW-0269">Exonuclease</keyword>
<keyword id="KW-0347">Helicase</keyword>
<keyword id="KW-0378">Hydrolase</keyword>
<keyword id="KW-0408">Iron</keyword>
<keyword id="KW-0411">Iron-sulfur</keyword>
<keyword id="KW-0479">Metal-binding</keyword>
<keyword id="KW-0540">Nuclease</keyword>
<keyword id="KW-0547">Nucleotide-binding</keyword>
<keyword id="KW-1185">Reference proteome</keyword>
<feature type="chain" id="PRO_0000379184" description="ATP-dependent helicase/deoxyribonuclease subunit B">
    <location>
        <begin position="1"/>
        <end position="1150"/>
    </location>
</feature>
<feature type="binding site" evidence="1">
    <location>
        <begin position="8"/>
        <end position="15"/>
    </location>
    <ligand>
        <name>ATP</name>
        <dbReference type="ChEBI" id="CHEBI:30616"/>
    </ligand>
</feature>
<feature type="binding site" evidence="1">
    <location>
        <position position="789"/>
    </location>
    <ligand>
        <name>[4Fe-4S] cluster</name>
        <dbReference type="ChEBI" id="CHEBI:49883"/>
    </ligand>
</feature>
<feature type="binding site" evidence="1">
    <location>
        <position position="1108"/>
    </location>
    <ligand>
        <name>[4Fe-4S] cluster</name>
        <dbReference type="ChEBI" id="CHEBI:49883"/>
    </ligand>
</feature>
<feature type="binding site" evidence="1">
    <location>
        <position position="1111"/>
    </location>
    <ligand>
        <name>[4Fe-4S] cluster</name>
        <dbReference type="ChEBI" id="CHEBI:49883"/>
    </ligand>
</feature>
<feature type="binding site" evidence="1">
    <location>
        <position position="1117"/>
    </location>
    <ligand>
        <name>[4Fe-4S] cluster</name>
        <dbReference type="ChEBI" id="CHEBI:49883"/>
    </ligand>
</feature>
<reference key="1">
    <citation type="journal article" date="2003" name="Proc. Natl. Acad. Sci. U.S.A.">
        <title>The genome sequence of Clostridium tetani, the causative agent of tetanus disease.</title>
        <authorList>
            <person name="Brueggemann H."/>
            <person name="Baeumer S."/>
            <person name="Fricke W.F."/>
            <person name="Wiezer A."/>
            <person name="Liesegang H."/>
            <person name="Decker I."/>
            <person name="Herzberg C."/>
            <person name="Martinez-Arias R."/>
            <person name="Merkl R."/>
            <person name="Henne A."/>
            <person name="Gottschalk G."/>
        </authorList>
    </citation>
    <scope>NUCLEOTIDE SEQUENCE [LARGE SCALE GENOMIC DNA]</scope>
    <source>
        <strain>Massachusetts / E88</strain>
    </source>
</reference>
<comment type="function">
    <text evidence="1">The heterodimer acts as both an ATP-dependent DNA helicase and an ATP-dependent, dual-direction single-stranded exonuclease. Recognizes the chi site generating a DNA molecule suitable for the initiation of homologous recombination. The AddB subunit has 5' -&gt; 3' nuclease activity but not helicase activity.</text>
</comment>
<comment type="cofactor">
    <cofactor evidence="1">
        <name>Mg(2+)</name>
        <dbReference type="ChEBI" id="CHEBI:18420"/>
    </cofactor>
</comment>
<comment type="cofactor">
    <cofactor evidence="1">
        <name>[4Fe-4S] cluster</name>
        <dbReference type="ChEBI" id="CHEBI:49883"/>
    </cofactor>
    <text evidence="1">Binds 1 [4Fe-4S] cluster.</text>
</comment>
<comment type="subunit">
    <text evidence="1">Heterodimer of AddA and AddB.</text>
</comment>
<comment type="miscellaneous">
    <text evidence="1">Despite having conserved helicase domains, this subunit does not have helicase activity.</text>
</comment>
<comment type="similarity">
    <text evidence="1">Belongs to the helicase family. AddB/RexB type 1 subfamily.</text>
</comment>
<comment type="sequence caution" evidence="2">
    <conflict type="erroneous initiation">
        <sequence resource="EMBL-CDS" id="AAO35291"/>
    </conflict>
    <text>Extended N-terminus.</text>
</comment>
<protein>
    <recommendedName>
        <fullName evidence="1">ATP-dependent helicase/deoxyribonuclease subunit B</fullName>
        <ecNumber evidence="1">3.1.-.-</ecNumber>
    </recommendedName>
    <alternativeName>
        <fullName evidence="1">ATP-dependent helicase/nuclease subunit AddB</fullName>
    </alternativeName>
</protein>
<sequence length="1150" mass="134317">MSLKFIYGRSGSGKSYYCFQDIKRKIEENSDKKLILLVPEQFSFQSEKNLINYIGERAVSRAEVLSFKRMAYRVFNEVGGVTHRYMNESGKNMLLYSILNELTGELKIFNNAANKNGFVSTLSDIITEFKRYNLTPEMIKEYLEVAEEREDNILKGKLQDIYLIYSKFQDSIRKKFIDEEENLTILADKLKESKYFDGAYIWVDEFFNFTPQEYLVLEELLLKAEKVNITLCTGGLNEGERIDNLDLFLPVKNTEEKILEFVKRNNIKYEKPIKLNCDPCYRFKNSKELSHMEKNLFAFPYKIHEKYTEDICVFQALNEYSEIEYTARDIIKLVRDNGFRYKDIAVITGDLEGYQSLIKAVFTEYGIPYFIDKKVEGDNNPLVIFILSSLEVLNKNWNYESVFRYLKAGLVDIKREEIDIIENYVLANGIRGKRWIEEKDWDYKILYGFNLTEEKEEEEEEKLKKINEIRRKITEPLIEFHNNIKGEITPKKMCLELYNFLEKMNISSKIESWIKYFKERNRLDKINEYKQIWDVAIGLMEQLVEVMKEEKLNSRTLENIFKSGFEQYELGIIPPSLDQVLVSSTKRLRSHEIKALYIVGTNDGVFPSVLDENGILSDLERENLRETGLEVAKDTKSTAFEEQFLMYVTLTTMSDYLRISYPIANEEGKTLRPSIVISRLRKIFPNLCEKSNVIKEEGDIEKISSPKPTFNEFISQLRVKEEGLELSSIWLSVYDWFMNNKEWKEKFINISQGFNHTNYAEIVDTRRVRKLYGSKLNMSVSRLEKFSQCPFAYFIRYGMNAKERKIYKVSTPDIGTLMHDVVESFSRHIEGKNISWEEIDRELCESFVSTMVDEKIKDMKGSILNSSPRYKHMTNRIKDILSKSMEVISQQISRGDFKPSAYELAFGFNGDFPPISIELSSGEKVNLIGRIDRVDKLENEDGTFIRIIDYKSGKQDFNLSDIYYGLQIQLLVYLDALLQEIEDSAKKEVNPAGILYFNMDDPLISTKKEITKEEAEKEILKKLKLKGLVLKDANIIKAMDNLISGYSDIISVRVNKDGSPSKNSSVADLEDFQLLRDYVRKLIVELCEEMLEGNISIKPYKKNNYTPCGFCDYSAICQFDTSIKGSQYRFINDKKDDEVLQCIREEMKED</sequence>